<accession>A0LC14</accession>
<dbReference type="EC" id="2.1.1.166" evidence="1"/>
<dbReference type="EMBL" id="CP000471">
    <property type="protein sequence ID" value="ABK45507.1"/>
    <property type="molecule type" value="Genomic_DNA"/>
</dbReference>
<dbReference type="RefSeq" id="WP_011714571.1">
    <property type="nucleotide sequence ID" value="NC_008576.1"/>
</dbReference>
<dbReference type="SMR" id="A0LC14"/>
<dbReference type="STRING" id="156889.Mmc1_3016"/>
<dbReference type="KEGG" id="mgm:Mmc1_3016"/>
<dbReference type="eggNOG" id="COG0293">
    <property type="taxonomic scope" value="Bacteria"/>
</dbReference>
<dbReference type="HOGENOM" id="CLU_009422_4_0_5"/>
<dbReference type="OrthoDB" id="9790080at2"/>
<dbReference type="Proteomes" id="UP000002586">
    <property type="component" value="Chromosome"/>
</dbReference>
<dbReference type="GO" id="GO:0005737">
    <property type="term" value="C:cytoplasm"/>
    <property type="evidence" value="ECO:0007669"/>
    <property type="project" value="UniProtKB-SubCell"/>
</dbReference>
<dbReference type="GO" id="GO:0008650">
    <property type="term" value="F:rRNA (uridine-2'-O-)-methyltransferase activity"/>
    <property type="evidence" value="ECO:0007669"/>
    <property type="project" value="UniProtKB-UniRule"/>
</dbReference>
<dbReference type="Gene3D" id="3.40.50.150">
    <property type="entry name" value="Vaccinia Virus protein VP39"/>
    <property type="match status" value="1"/>
</dbReference>
<dbReference type="HAMAP" id="MF_01547">
    <property type="entry name" value="RNA_methyltr_E"/>
    <property type="match status" value="1"/>
</dbReference>
<dbReference type="InterPro" id="IPR050082">
    <property type="entry name" value="RNA_methyltr_RlmE"/>
</dbReference>
<dbReference type="InterPro" id="IPR002877">
    <property type="entry name" value="RNA_MeTrfase_FtsJ_dom"/>
</dbReference>
<dbReference type="InterPro" id="IPR015507">
    <property type="entry name" value="rRNA-MeTfrase_E"/>
</dbReference>
<dbReference type="InterPro" id="IPR029063">
    <property type="entry name" value="SAM-dependent_MTases_sf"/>
</dbReference>
<dbReference type="PANTHER" id="PTHR10920">
    <property type="entry name" value="RIBOSOMAL RNA METHYLTRANSFERASE"/>
    <property type="match status" value="1"/>
</dbReference>
<dbReference type="PANTHER" id="PTHR10920:SF18">
    <property type="entry name" value="RRNA METHYLTRANSFERASE 2, MITOCHONDRIAL"/>
    <property type="match status" value="1"/>
</dbReference>
<dbReference type="Pfam" id="PF01728">
    <property type="entry name" value="FtsJ"/>
    <property type="match status" value="1"/>
</dbReference>
<dbReference type="PIRSF" id="PIRSF005461">
    <property type="entry name" value="23S_rRNA_mtase"/>
    <property type="match status" value="1"/>
</dbReference>
<dbReference type="SUPFAM" id="SSF53335">
    <property type="entry name" value="S-adenosyl-L-methionine-dependent methyltransferases"/>
    <property type="match status" value="1"/>
</dbReference>
<protein>
    <recommendedName>
        <fullName evidence="1">Ribosomal RNA large subunit methyltransferase E</fullName>
        <ecNumber evidence="1">2.1.1.166</ecNumber>
    </recommendedName>
    <alternativeName>
        <fullName evidence="1">23S rRNA Um2552 methyltransferase</fullName>
    </alternativeName>
    <alternativeName>
        <fullName evidence="1">rRNA (uridine-2'-O-)-methyltransferase</fullName>
    </alternativeName>
</protein>
<evidence type="ECO:0000255" key="1">
    <source>
        <dbReference type="HAMAP-Rule" id="MF_01547"/>
    </source>
</evidence>
<comment type="function">
    <text evidence="1">Specifically methylates the uridine in position 2552 of 23S rRNA at the 2'-O position of the ribose in the fully assembled 50S ribosomal subunit.</text>
</comment>
<comment type="catalytic activity">
    <reaction evidence="1">
        <text>uridine(2552) in 23S rRNA + S-adenosyl-L-methionine = 2'-O-methyluridine(2552) in 23S rRNA + S-adenosyl-L-homocysteine + H(+)</text>
        <dbReference type="Rhea" id="RHEA:42720"/>
        <dbReference type="Rhea" id="RHEA-COMP:10202"/>
        <dbReference type="Rhea" id="RHEA-COMP:10203"/>
        <dbReference type="ChEBI" id="CHEBI:15378"/>
        <dbReference type="ChEBI" id="CHEBI:57856"/>
        <dbReference type="ChEBI" id="CHEBI:59789"/>
        <dbReference type="ChEBI" id="CHEBI:65315"/>
        <dbReference type="ChEBI" id="CHEBI:74478"/>
        <dbReference type="EC" id="2.1.1.166"/>
    </reaction>
</comment>
<comment type="subcellular location">
    <subcellularLocation>
        <location evidence="1">Cytoplasm</location>
    </subcellularLocation>
</comment>
<comment type="similarity">
    <text evidence="1">Belongs to the class I-like SAM-binding methyltransferase superfamily. RNA methyltransferase RlmE family.</text>
</comment>
<organism>
    <name type="scientific">Magnetococcus marinus (strain ATCC BAA-1437 / JCM 17883 / MC-1)</name>
    <dbReference type="NCBI Taxonomy" id="156889"/>
    <lineage>
        <taxon>Bacteria</taxon>
        <taxon>Pseudomonadati</taxon>
        <taxon>Pseudomonadota</taxon>
        <taxon>Alphaproteobacteria</taxon>
        <taxon>Magnetococcales</taxon>
        <taxon>Magnetococcaceae</taxon>
        <taxon>Magnetococcus</taxon>
    </lineage>
</organism>
<reference key="1">
    <citation type="journal article" date="2009" name="Appl. Environ. Microbiol.">
        <title>Complete genome sequence of the chemolithoautotrophic marine magnetotactic coccus strain MC-1.</title>
        <authorList>
            <person name="Schubbe S."/>
            <person name="Williams T.J."/>
            <person name="Xie G."/>
            <person name="Kiss H.E."/>
            <person name="Brettin T.S."/>
            <person name="Martinez D."/>
            <person name="Ross C.A."/>
            <person name="Schuler D."/>
            <person name="Cox B.L."/>
            <person name="Nealson K.H."/>
            <person name="Bazylinski D.A."/>
        </authorList>
    </citation>
    <scope>NUCLEOTIDE SEQUENCE [LARGE SCALE GENOMIC DNA]</scope>
    <source>
        <strain>ATCC BAA-1437 / JCM 17883 / MC-1</strain>
    </source>
</reference>
<sequence length="214" mass="23244">MAKQRPSSKRWLREHHNDPYVQQARREGYRSRAAYKLMELQEVVKEDGKSLLLIPVGANVVELGAAPGGWTQVAVKLAGVEGSVVGIDLLAMDPVPGAEILVGDFLDDAMLAQLQGLLHEGRVDVVLSDMAPNMCGVKSADQLRGEALAEAAFQFVEENLKTGGNFAVKLFNGPGFHDMVKQARAMFTVVKVVKPDSSRSRSPEHYLVGMGFKG</sequence>
<feature type="chain" id="PRO_0000282757" description="Ribosomal RNA large subunit methyltransferase E">
    <location>
        <begin position="1"/>
        <end position="214"/>
    </location>
</feature>
<feature type="active site" description="Proton acceptor" evidence="1">
    <location>
        <position position="169"/>
    </location>
</feature>
<feature type="binding site" evidence="1">
    <location>
        <position position="68"/>
    </location>
    <ligand>
        <name>S-adenosyl-L-methionine</name>
        <dbReference type="ChEBI" id="CHEBI:59789"/>
    </ligand>
</feature>
<feature type="binding site" evidence="1">
    <location>
        <position position="70"/>
    </location>
    <ligand>
        <name>S-adenosyl-L-methionine</name>
        <dbReference type="ChEBI" id="CHEBI:59789"/>
    </ligand>
</feature>
<feature type="binding site" evidence="1">
    <location>
        <position position="88"/>
    </location>
    <ligand>
        <name>S-adenosyl-L-methionine</name>
        <dbReference type="ChEBI" id="CHEBI:59789"/>
    </ligand>
</feature>
<feature type="binding site" evidence="1">
    <location>
        <position position="104"/>
    </location>
    <ligand>
        <name>S-adenosyl-L-methionine</name>
        <dbReference type="ChEBI" id="CHEBI:59789"/>
    </ligand>
</feature>
<feature type="binding site" evidence="1">
    <location>
        <position position="129"/>
    </location>
    <ligand>
        <name>S-adenosyl-L-methionine</name>
        <dbReference type="ChEBI" id="CHEBI:59789"/>
    </ligand>
</feature>
<gene>
    <name evidence="1" type="primary">rlmE</name>
    <name evidence="1" type="synonym">ftsJ</name>
    <name evidence="1" type="synonym">rrmJ</name>
    <name type="ordered locus">Mmc1_3016</name>
</gene>
<name>RLME_MAGMM</name>
<proteinExistence type="inferred from homology"/>
<keyword id="KW-0963">Cytoplasm</keyword>
<keyword id="KW-0489">Methyltransferase</keyword>
<keyword id="KW-1185">Reference proteome</keyword>
<keyword id="KW-0698">rRNA processing</keyword>
<keyword id="KW-0949">S-adenosyl-L-methionine</keyword>
<keyword id="KW-0808">Transferase</keyword>